<accession>B1XSJ0</accession>
<organism>
    <name type="scientific">Polynucleobacter necessarius subsp. necessarius (strain STIR1)</name>
    <dbReference type="NCBI Taxonomy" id="452638"/>
    <lineage>
        <taxon>Bacteria</taxon>
        <taxon>Pseudomonadati</taxon>
        <taxon>Pseudomonadota</taxon>
        <taxon>Betaproteobacteria</taxon>
        <taxon>Burkholderiales</taxon>
        <taxon>Burkholderiaceae</taxon>
        <taxon>Polynucleobacter</taxon>
    </lineage>
</organism>
<name>ARGB_POLNS</name>
<sequence>MTKHLPTISDISPLLKAEILAEALPYIRSYHGKTIVIKYGGNAMVEERLKESFARDVILLKLVGMNPVVVHGGGPQIDEALKKIGKTGTFIQGMRVTDEETMEVVEWVLGGEVQQDIVMLINHFGGQAVGLTGKDGGLIRAKKMLVANEKQPGGTIDLGFVGEIEAINPAVVKALQDDAFIPVISPIGFSEEGQAYNINADLVAGKMAEILHAEKLVMMTNIPGVMDKNGTLLTDLTAREIDGLFADGTISGGMLPKISSALDAAKSGVNSVHIIDGRIEHSLLLEILTEQAFGTMIRSR</sequence>
<keyword id="KW-0028">Amino-acid biosynthesis</keyword>
<keyword id="KW-0055">Arginine biosynthesis</keyword>
<keyword id="KW-0067">ATP-binding</keyword>
<keyword id="KW-0963">Cytoplasm</keyword>
<keyword id="KW-0418">Kinase</keyword>
<keyword id="KW-0547">Nucleotide-binding</keyword>
<keyword id="KW-0808">Transferase</keyword>
<proteinExistence type="inferred from homology"/>
<feature type="chain" id="PRO_1000092871" description="Acetylglutamate kinase">
    <location>
        <begin position="1"/>
        <end position="300"/>
    </location>
</feature>
<feature type="binding site" evidence="1">
    <location>
        <begin position="73"/>
        <end position="74"/>
    </location>
    <ligand>
        <name>substrate</name>
    </ligand>
</feature>
<feature type="binding site" evidence="1">
    <location>
        <position position="95"/>
    </location>
    <ligand>
        <name>substrate</name>
    </ligand>
</feature>
<feature type="binding site" evidence="1">
    <location>
        <position position="197"/>
    </location>
    <ligand>
        <name>substrate</name>
    </ligand>
</feature>
<feature type="site" description="Transition state stabilizer" evidence="1">
    <location>
        <position position="38"/>
    </location>
</feature>
<feature type="site" description="Transition state stabilizer" evidence="1">
    <location>
        <position position="257"/>
    </location>
</feature>
<dbReference type="EC" id="2.7.2.8" evidence="1"/>
<dbReference type="EMBL" id="CP001010">
    <property type="protein sequence ID" value="ACB44789.1"/>
    <property type="molecule type" value="Genomic_DNA"/>
</dbReference>
<dbReference type="SMR" id="B1XSJ0"/>
<dbReference type="STRING" id="452638.Pnec_1730"/>
<dbReference type="KEGG" id="pne:Pnec_1730"/>
<dbReference type="eggNOG" id="COG0548">
    <property type="taxonomic scope" value="Bacteria"/>
</dbReference>
<dbReference type="HOGENOM" id="CLU_053680_0_0_4"/>
<dbReference type="OrthoDB" id="9803155at2"/>
<dbReference type="UniPathway" id="UPA00068">
    <property type="reaction ID" value="UER00107"/>
</dbReference>
<dbReference type="GO" id="GO:0005737">
    <property type="term" value="C:cytoplasm"/>
    <property type="evidence" value="ECO:0007669"/>
    <property type="project" value="UniProtKB-SubCell"/>
</dbReference>
<dbReference type="GO" id="GO:0003991">
    <property type="term" value="F:acetylglutamate kinase activity"/>
    <property type="evidence" value="ECO:0007669"/>
    <property type="project" value="UniProtKB-UniRule"/>
</dbReference>
<dbReference type="GO" id="GO:0005524">
    <property type="term" value="F:ATP binding"/>
    <property type="evidence" value="ECO:0007669"/>
    <property type="project" value="UniProtKB-UniRule"/>
</dbReference>
<dbReference type="GO" id="GO:0042450">
    <property type="term" value="P:arginine biosynthetic process via ornithine"/>
    <property type="evidence" value="ECO:0007669"/>
    <property type="project" value="UniProtKB-UniRule"/>
</dbReference>
<dbReference type="GO" id="GO:0006526">
    <property type="term" value="P:L-arginine biosynthetic process"/>
    <property type="evidence" value="ECO:0007669"/>
    <property type="project" value="UniProtKB-UniPathway"/>
</dbReference>
<dbReference type="CDD" id="cd04250">
    <property type="entry name" value="AAK_NAGK-C"/>
    <property type="match status" value="1"/>
</dbReference>
<dbReference type="FunFam" id="3.40.1160.10:FF:000004">
    <property type="entry name" value="Acetylglutamate kinase"/>
    <property type="match status" value="1"/>
</dbReference>
<dbReference type="Gene3D" id="3.40.1160.10">
    <property type="entry name" value="Acetylglutamate kinase-like"/>
    <property type="match status" value="1"/>
</dbReference>
<dbReference type="HAMAP" id="MF_00082">
    <property type="entry name" value="ArgB"/>
    <property type="match status" value="1"/>
</dbReference>
<dbReference type="InterPro" id="IPR036393">
    <property type="entry name" value="AceGlu_kinase-like_sf"/>
</dbReference>
<dbReference type="InterPro" id="IPR004662">
    <property type="entry name" value="AcgluKinase_fam"/>
</dbReference>
<dbReference type="InterPro" id="IPR037528">
    <property type="entry name" value="ArgB"/>
</dbReference>
<dbReference type="InterPro" id="IPR001048">
    <property type="entry name" value="Asp/Glu/Uridylate_kinase"/>
</dbReference>
<dbReference type="InterPro" id="IPR001057">
    <property type="entry name" value="Glu/AcGlu_kinase"/>
</dbReference>
<dbReference type="InterPro" id="IPR041727">
    <property type="entry name" value="NAGK-C"/>
</dbReference>
<dbReference type="NCBIfam" id="TIGR00761">
    <property type="entry name" value="argB"/>
    <property type="match status" value="1"/>
</dbReference>
<dbReference type="PANTHER" id="PTHR23342">
    <property type="entry name" value="N-ACETYLGLUTAMATE SYNTHASE"/>
    <property type="match status" value="1"/>
</dbReference>
<dbReference type="PANTHER" id="PTHR23342:SF0">
    <property type="entry name" value="N-ACETYLGLUTAMATE SYNTHASE, MITOCHONDRIAL"/>
    <property type="match status" value="1"/>
</dbReference>
<dbReference type="Pfam" id="PF00696">
    <property type="entry name" value="AA_kinase"/>
    <property type="match status" value="1"/>
</dbReference>
<dbReference type="PIRSF" id="PIRSF000728">
    <property type="entry name" value="NAGK"/>
    <property type="match status" value="1"/>
</dbReference>
<dbReference type="PRINTS" id="PR00474">
    <property type="entry name" value="GLU5KINASE"/>
</dbReference>
<dbReference type="SUPFAM" id="SSF53633">
    <property type="entry name" value="Carbamate kinase-like"/>
    <property type="match status" value="1"/>
</dbReference>
<protein>
    <recommendedName>
        <fullName evidence="1">Acetylglutamate kinase</fullName>
        <ecNumber evidence="1">2.7.2.8</ecNumber>
    </recommendedName>
    <alternativeName>
        <fullName evidence="1">N-acetyl-L-glutamate 5-phosphotransferase</fullName>
    </alternativeName>
    <alternativeName>
        <fullName evidence="1">NAG kinase</fullName>
        <shortName evidence="1">NAGK</shortName>
    </alternativeName>
</protein>
<gene>
    <name evidence="1" type="primary">argB</name>
    <name type="ordered locus">Pnec_1730</name>
</gene>
<reference key="1">
    <citation type="journal article" date="2013" name="Proc. Natl. Acad. Sci. U.S.A.">
        <title>Polynucleobacter necessarius, a model for genome reduction in both free-living and symbiotic bacteria.</title>
        <authorList>
            <person name="Boscaro V."/>
            <person name="Felletti M."/>
            <person name="Vannini C."/>
            <person name="Ackerman M.S."/>
            <person name="Chain P.S."/>
            <person name="Malfatti S."/>
            <person name="Vergez L.M."/>
            <person name="Shin M."/>
            <person name="Doak T.G."/>
            <person name="Lynch M."/>
            <person name="Petroni G."/>
        </authorList>
    </citation>
    <scope>NUCLEOTIDE SEQUENCE [LARGE SCALE GENOMIC DNA]</scope>
    <source>
        <strain>STIR1</strain>
    </source>
</reference>
<evidence type="ECO:0000255" key="1">
    <source>
        <dbReference type="HAMAP-Rule" id="MF_00082"/>
    </source>
</evidence>
<comment type="function">
    <text evidence="1">Catalyzes the ATP-dependent phosphorylation of N-acetyl-L-glutamate.</text>
</comment>
<comment type="catalytic activity">
    <reaction evidence="1">
        <text>N-acetyl-L-glutamate + ATP = N-acetyl-L-glutamyl 5-phosphate + ADP</text>
        <dbReference type="Rhea" id="RHEA:14629"/>
        <dbReference type="ChEBI" id="CHEBI:30616"/>
        <dbReference type="ChEBI" id="CHEBI:44337"/>
        <dbReference type="ChEBI" id="CHEBI:57936"/>
        <dbReference type="ChEBI" id="CHEBI:456216"/>
        <dbReference type="EC" id="2.7.2.8"/>
    </reaction>
</comment>
<comment type="pathway">
    <text evidence="1">Amino-acid biosynthesis; L-arginine biosynthesis; N(2)-acetyl-L-ornithine from L-glutamate: step 2/4.</text>
</comment>
<comment type="subcellular location">
    <subcellularLocation>
        <location evidence="1">Cytoplasm</location>
    </subcellularLocation>
</comment>
<comment type="similarity">
    <text evidence="1">Belongs to the acetylglutamate kinase family. ArgB subfamily.</text>
</comment>